<keyword id="KW-0067">ATP-binding</keyword>
<keyword id="KW-0963">Cytoplasm</keyword>
<keyword id="KW-0227">DNA damage</keyword>
<keyword id="KW-0228">DNA excision</keyword>
<keyword id="KW-0234">DNA repair</keyword>
<keyword id="KW-0267">Excision nuclease</keyword>
<keyword id="KW-0347">Helicase</keyword>
<keyword id="KW-0378">Hydrolase</keyword>
<keyword id="KW-0547">Nucleotide-binding</keyword>
<keyword id="KW-1185">Reference proteome</keyword>
<keyword id="KW-0742">SOS response</keyword>
<evidence type="ECO:0000255" key="1">
    <source>
        <dbReference type="HAMAP-Rule" id="MF_00204"/>
    </source>
</evidence>
<name>UVRB_BORA1</name>
<dbReference type="EMBL" id="AM167904">
    <property type="protein sequence ID" value="CAJ49118.1"/>
    <property type="molecule type" value="Genomic_DNA"/>
</dbReference>
<dbReference type="RefSeq" id="WP_012417182.1">
    <property type="nucleotide sequence ID" value="NC_010645.1"/>
</dbReference>
<dbReference type="SMR" id="Q2L244"/>
<dbReference type="STRING" id="360910.BAV1505"/>
<dbReference type="KEGG" id="bav:BAV1505"/>
<dbReference type="eggNOG" id="COG0556">
    <property type="taxonomic scope" value="Bacteria"/>
</dbReference>
<dbReference type="HOGENOM" id="CLU_009621_2_1_4"/>
<dbReference type="OrthoDB" id="9806651at2"/>
<dbReference type="Proteomes" id="UP000001977">
    <property type="component" value="Chromosome"/>
</dbReference>
<dbReference type="GO" id="GO:0005737">
    <property type="term" value="C:cytoplasm"/>
    <property type="evidence" value="ECO:0007669"/>
    <property type="project" value="UniProtKB-SubCell"/>
</dbReference>
<dbReference type="GO" id="GO:0009380">
    <property type="term" value="C:excinuclease repair complex"/>
    <property type="evidence" value="ECO:0007669"/>
    <property type="project" value="InterPro"/>
</dbReference>
<dbReference type="GO" id="GO:0005524">
    <property type="term" value="F:ATP binding"/>
    <property type="evidence" value="ECO:0007669"/>
    <property type="project" value="UniProtKB-UniRule"/>
</dbReference>
<dbReference type="GO" id="GO:0016887">
    <property type="term" value="F:ATP hydrolysis activity"/>
    <property type="evidence" value="ECO:0007669"/>
    <property type="project" value="InterPro"/>
</dbReference>
<dbReference type="GO" id="GO:0003677">
    <property type="term" value="F:DNA binding"/>
    <property type="evidence" value="ECO:0007669"/>
    <property type="project" value="UniProtKB-UniRule"/>
</dbReference>
<dbReference type="GO" id="GO:0009381">
    <property type="term" value="F:excinuclease ABC activity"/>
    <property type="evidence" value="ECO:0007669"/>
    <property type="project" value="UniProtKB-UniRule"/>
</dbReference>
<dbReference type="GO" id="GO:0004386">
    <property type="term" value="F:helicase activity"/>
    <property type="evidence" value="ECO:0007669"/>
    <property type="project" value="UniProtKB-KW"/>
</dbReference>
<dbReference type="GO" id="GO:0006289">
    <property type="term" value="P:nucleotide-excision repair"/>
    <property type="evidence" value="ECO:0007669"/>
    <property type="project" value="UniProtKB-UniRule"/>
</dbReference>
<dbReference type="GO" id="GO:0009432">
    <property type="term" value="P:SOS response"/>
    <property type="evidence" value="ECO:0007669"/>
    <property type="project" value="UniProtKB-UniRule"/>
</dbReference>
<dbReference type="CDD" id="cd17916">
    <property type="entry name" value="DEXHc_UvrB"/>
    <property type="match status" value="1"/>
</dbReference>
<dbReference type="CDD" id="cd18790">
    <property type="entry name" value="SF2_C_UvrB"/>
    <property type="match status" value="1"/>
</dbReference>
<dbReference type="FunFam" id="3.40.50.300:FF:000477">
    <property type="entry name" value="UvrABC system protein B"/>
    <property type="match status" value="1"/>
</dbReference>
<dbReference type="Gene3D" id="6.10.140.240">
    <property type="match status" value="1"/>
</dbReference>
<dbReference type="Gene3D" id="3.40.50.300">
    <property type="entry name" value="P-loop containing nucleotide triphosphate hydrolases"/>
    <property type="match status" value="3"/>
</dbReference>
<dbReference type="Gene3D" id="4.10.860.10">
    <property type="entry name" value="UVR domain"/>
    <property type="match status" value="1"/>
</dbReference>
<dbReference type="HAMAP" id="MF_00204">
    <property type="entry name" value="UvrB"/>
    <property type="match status" value="1"/>
</dbReference>
<dbReference type="InterPro" id="IPR006935">
    <property type="entry name" value="Helicase/UvrB_N"/>
</dbReference>
<dbReference type="InterPro" id="IPR014001">
    <property type="entry name" value="Helicase_ATP-bd"/>
</dbReference>
<dbReference type="InterPro" id="IPR001650">
    <property type="entry name" value="Helicase_C-like"/>
</dbReference>
<dbReference type="InterPro" id="IPR027417">
    <property type="entry name" value="P-loop_NTPase"/>
</dbReference>
<dbReference type="InterPro" id="IPR001943">
    <property type="entry name" value="UVR_dom"/>
</dbReference>
<dbReference type="InterPro" id="IPR036876">
    <property type="entry name" value="UVR_dom_sf"/>
</dbReference>
<dbReference type="InterPro" id="IPR004807">
    <property type="entry name" value="UvrB"/>
</dbReference>
<dbReference type="InterPro" id="IPR041471">
    <property type="entry name" value="UvrB_inter"/>
</dbReference>
<dbReference type="InterPro" id="IPR024759">
    <property type="entry name" value="UvrB_YAD/RRR_dom"/>
</dbReference>
<dbReference type="NCBIfam" id="NF003673">
    <property type="entry name" value="PRK05298.1"/>
    <property type="match status" value="1"/>
</dbReference>
<dbReference type="NCBIfam" id="TIGR00631">
    <property type="entry name" value="uvrb"/>
    <property type="match status" value="1"/>
</dbReference>
<dbReference type="PANTHER" id="PTHR24029">
    <property type="entry name" value="UVRABC SYSTEM PROTEIN B"/>
    <property type="match status" value="1"/>
</dbReference>
<dbReference type="PANTHER" id="PTHR24029:SF0">
    <property type="entry name" value="UVRABC SYSTEM PROTEIN B"/>
    <property type="match status" value="1"/>
</dbReference>
<dbReference type="Pfam" id="PF00271">
    <property type="entry name" value="Helicase_C"/>
    <property type="match status" value="1"/>
</dbReference>
<dbReference type="Pfam" id="PF04851">
    <property type="entry name" value="ResIII"/>
    <property type="match status" value="1"/>
</dbReference>
<dbReference type="Pfam" id="PF02151">
    <property type="entry name" value="UVR"/>
    <property type="match status" value="1"/>
</dbReference>
<dbReference type="Pfam" id="PF12344">
    <property type="entry name" value="UvrB"/>
    <property type="match status" value="1"/>
</dbReference>
<dbReference type="Pfam" id="PF17757">
    <property type="entry name" value="UvrB_inter"/>
    <property type="match status" value="1"/>
</dbReference>
<dbReference type="SMART" id="SM00487">
    <property type="entry name" value="DEXDc"/>
    <property type="match status" value="1"/>
</dbReference>
<dbReference type="SMART" id="SM00490">
    <property type="entry name" value="HELICc"/>
    <property type="match status" value="1"/>
</dbReference>
<dbReference type="SUPFAM" id="SSF46600">
    <property type="entry name" value="C-terminal UvrC-binding domain of UvrB"/>
    <property type="match status" value="1"/>
</dbReference>
<dbReference type="SUPFAM" id="SSF52540">
    <property type="entry name" value="P-loop containing nucleoside triphosphate hydrolases"/>
    <property type="match status" value="2"/>
</dbReference>
<dbReference type="PROSITE" id="PS51192">
    <property type="entry name" value="HELICASE_ATP_BIND_1"/>
    <property type="match status" value="1"/>
</dbReference>
<dbReference type="PROSITE" id="PS51194">
    <property type="entry name" value="HELICASE_CTER"/>
    <property type="match status" value="1"/>
</dbReference>
<dbReference type="PROSITE" id="PS50151">
    <property type="entry name" value="UVR"/>
    <property type="match status" value="1"/>
</dbReference>
<feature type="chain" id="PRO_1000077868" description="UvrABC system protein B">
    <location>
        <begin position="1"/>
        <end position="676"/>
    </location>
</feature>
<feature type="domain" description="Helicase ATP-binding" evidence="1">
    <location>
        <begin position="35"/>
        <end position="192"/>
    </location>
</feature>
<feature type="domain" description="Helicase C-terminal" evidence="1">
    <location>
        <begin position="439"/>
        <end position="605"/>
    </location>
</feature>
<feature type="domain" description="UVR" evidence="1">
    <location>
        <begin position="634"/>
        <end position="669"/>
    </location>
</feature>
<feature type="short sequence motif" description="Beta-hairpin">
    <location>
        <begin position="101"/>
        <end position="124"/>
    </location>
</feature>
<feature type="binding site" evidence="1">
    <location>
        <begin position="48"/>
        <end position="55"/>
    </location>
    <ligand>
        <name>ATP</name>
        <dbReference type="ChEBI" id="CHEBI:30616"/>
    </ligand>
</feature>
<reference key="1">
    <citation type="journal article" date="2006" name="J. Bacteriol.">
        <title>Comparison of the genome sequence of the poultry pathogen Bordetella avium with those of B. bronchiseptica, B. pertussis, and B. parapertussis reveals extensive diversity in surface structures associated with host interaction.</title>
        <authorList>
            <person name="Sebaihia M."/>
            <person name="Preston A."/>
            <person name="Maskell D.J."/>
            <person name="Kuzmiak H."/>
            <person name="Connell T.D."/>
            <person name="King N.D."/>
            <person name="Orndorff P.E."/>
            <person name="Miyamoto D.M."/>
            <person name="Thomson N.R."/>
            <person name="Harris D."/>
            <person name="Goble A."/>
            <person name="Lord A."/>
            <person name="Murphy L."/>
            <person name="Quail M.A."/>
            <person name="Rutter S."/>
            <person name="Squares R."/>
            <person name="Squares S."/>
            <person name="Woodward J."/>
            <person name="Parkhill J."/>
            <person name="Temple L.M."/>
        </authorList>
    </citation>
    <scope>NUCLEOTIDE SEQUENCE [LARGE SCALE GENOMIC DNA]</scope>
    <source>
        <strain>197N</strain>
    </source>
</reference>
<accession>Q2L244</accession>
<protein>
    <recommendedName>
        <fullName evidence="1">UvrABC system protein B</fullName>
        <shortName evidence="1">Protein UvrB</shortName>
    </recommendedName>
    <alternativeName>
        <fullName evidence="1">Excinuclease ABC subunit B</fullName>
    </alternativeName>
</protein>
<organism>
    <name type="scientific">Bordetella avium (strain 197N)</name>
    <dbReference type="NCBI Taxonomy" id="360910"/>
    <lineage>
        <taxon>Bacteria</taxon>
        <taxon>Pseudomonadati</taxon>
        <taxon>Pseudomonadota</taxon>
        <taxon>Betaproteobacteria</taxon>
        <taxon>Burkholderiales</taxon>
        <taxon>Alcaligenaceae</taxon>
        <taxon>Bordetella</taxon>
    </lineage>
</organism>
<gene>
    <name evidence="1" type="primary">uvrB</name>
    <name type="ordered locus">BAV1505</name>
</gene>
<sequence>MTDPGYVEFPGSPFQLFQPYAPAGDQPAAIEGLVQGVADGLMYQTLLGVTGSGKTFTMANVIARLGRPALVLAPNKTLAAQLYAEMRDFFPKNAVEYFVSYYDYYQPEAYVPTRDLFIEKDSSVNEHIEQMRLSATKSLLERRDTIIVGTVSCIYGIGNPGDYHAMVLILRAGDRISRREVLARLVAMQYTRNDADFTRGAFRVRGETIDIFPAESPELALRLTLFDDEVETLELFDPLTGKVRQKLPRFTVYPGSHYVTPRETVLRAIETIREELRERLSTFTNEGKLLEAQRIEQRTRFDLEMLQELGFCKGIENYSRHLSGAAPGEPPPTLIDYLPADALMFIDESHVTVGQLGGMYRGDRARKETLVQYGFRLPSALDNRPLRLEEFEARMRQCVFVSATPADYERQHADNVVEQVVRPTGLVDPEVEVRPAHTQVDDLLGEIRHRVARQERVLVTTLTKRMSEDLTDFLAEHGVRVRYLHSDIDTVERVEIIRDLRLGVFDVLVGINLLREGLDIPEVSLVAILDADKEGFLRSERSLIQTIGRAARNLHGHAILYADRITDSMRRAMDETSRRRSKQLQHNADHGITARGVNKAVRELIDGVMAPATTHDALEDAVPLAALTDEKAMAREIKRLEKLMMDHARNLEFEQAAAARDALTALKNRLLLDGVR</sequence>
<comment type="function">
    <text evidence="1">The UvrABC repair system catalyzes the recognition and processing of DNA lesions. A damage recognition complex composed of 2 UvrA and 2 UvrB subunits scans DNA for abnormalities. Upon binding of the UvrA(2)B(2) complex to a putative damaged site, the DNA wraps around one UvrB monomer. DNA wrap is dependent on ATP binding by UvrB and probably causes local melting of the DNA helix, facilitating insertion of UvrB beta-hairpin between the DNA strands. Then UvrB probes one DNA strand for the presence of a lesion. If a lesion is found the UvrA subunits dissociate and the UvrB-DNA preincision complex is formed. This complex is subsequently bound by UvrC and the second UvrB is released. If no lesion is found, the DNA wraps around the other UvrB subunit that will check the other stand for damage.</text>
</comment>
<comment type="subunit">
    <text evidence="1">Forms a heterotetramer with UvrA during the search for lesions. Interacts with UvrC in an incision complex.</text>
</comment>
<comment type="subcellular location">
    <subcellularLocation>
        <location evidence="1">Cytoplasm</location>
    </subcellularLocation>
</comment>
<comment type="domain">
    <text evidence="1">The beta-hairpin motif is involved in DNA binding.</text>
</comment>
<comment type="similarity">
    <text evidence="1">Belongs to the UvrB family.</text>
</comment>
<proteinExistence type="inferred from homology"/>